<proteinExistence type="inferred from homology"/>
<keyword id="KW-0028">Amino-acid biosynthesis</keyword>
<keyword id="KW-0100">Branched-chain amino acid biosynthesis</keyword>
<keyword id="KW-0460">Magnesium</keyword>
<keyword id="KW-0479">Metal-binding</keyword>
<keyword id="KW-0521">NADP</keyword>
<keyword id="KW-0560">Oxidoreductase</keyword>
<keyword id="KW-1185">Reference proteome</keyword>
<dbReference type="EC" id="1.1.1.86" evidence="1"/>
<dbReference type="EMBL" id="CP001219">
    <property type="protein sequence ID" value="ACK78883.1"/>
    <property type="molecule type" value="Genomic_DNA"/>
</dbReference>
<dbReference type="RefSeq" id="WP_012536329.1">
    <property type="nucleotide sequence ID" value="NC_011761.1"/>
</dbReference>
<dbReference type="SMR" id="B7J643"/>
<dbReference type="STRING" id="243159.AFE_0747"/>
<dbReference type="PaxDb" id="243159-AFE_0747"/>
<dbReference type="GeneID" id="65280093"/>
<dbReference type="KEGG" id="afr:AFE_0747"/>
<dbReference type="eggNOG" id="COG0059">
    <property type="taxonomic scope" value="Bacteria"/>
</dbReference>
<dbReference type="HOGENOM" id="CLU_033821_0_1_6"/>
<dbReference type="UniPathway" id="UPA00047">
    <property type="reaction ID" value="UER00056"/>
</dbReference>
<dbReference type="UniPathway" id="UPA00049">
    <property type="reaction ID" value="UER00060"/>
</dbReference>
<dbReference type="Proteomes" id="UP000001362">
    <property type="component" value="Chromosome"/>
</dbReference>
<dbReference type="GO" id="GO:0005829">
    <property type="term" value="C:cytosol"/>
    <property type="evidence" value="ECO:0007669"/>
    <property type="project" value="TreeGrafter"/>
</dbReference>
<dbReference type="GO" id="GO:0004455">
    <property type="term" value="F:ketol-acid reductoisomerase activity"/>
    <property type="evidence" value="ECO:0007669"/>
    <property type="project" value="UniProtKB-UniRule"/>
</dbReference>
<dbReference type="GO" id="GO:0000287">
    <property type="term" value="F:magnesium ion binding"/>
    <property type="evidence" value="ECO:0007669"/>
    <property type="project" value="UniProtKB-UniRule"/>
</dbReference>
<dbReference type="GO" id="GO:0050661">
    <property type="term" value="F:NADP binding"/>
    <property type="evidence" value="ECO:0007669"/>
    <property type="project" value="InterPro"/>
</dbReference>
<dbReference type="GO" id="GO:0009097">
    <property type="term" value="P:isoleucine biosynthetic process"/>
    <property type="evidence" value="ECO:0007669"/>
    <property type="project" value="UniProtKB-UniRule"/>
</dbReference>
<dbReference type="GO" id="GO:0009099">
    <property type="term" value="P:L-valine biosynthetic process"/>
    <property type="evidence" value="ECO:0007669"/>
    <property type="project" value="UniProtKB-UniRule"/>
</dbReference>
<dbReference type="FunFam" id="3.40.50.720:FF:000023">
    <property type="entry name" value="Ketol-acid reductoisomerase (NADP(+))"/>
    <property type="match status" value="1"/>
</dbReference>
<dbReference type="Gene3D" id="6.10.240.10">
    <property type="match status" value="1"/>
</dbReference>
<dbReference type="Gene3D" id="3.40.50.720">
    <property type="entry name" value="NAD(P)-binding Rossmann-like Domain"/>
    <property type="match status" value="1"/>
</dbReference>
<dbReference type="HAMAP" id="MF_00435">
    <property type="entry name" value="IlvC"/>
    <property type="match status" value="1"/>
</dbReference>
<dbReference type="InterPro" id="IPR008927">
    <property type="entry name" value="6-PGluconate_DH-like_C_sf"/>
</dbReference>
<dbReference type="InterPro" id="IPR013023">
    <property type="entry name" value="KARI"/>
</dbReference>
<dbReference type="InterPro" id="IPR000506">
    <property type="entry name" value="KARI_C"/>
</dbReference>
<dbReference type="InterPro" id="IPR013116">
    <property type="entry name" value="KARI_N"/>
</dbReference>
<dbReference type="InterPro" id="IPR014359">
    <property type="entry name" value="KARI_prok"/>
</dbReference>
<dbReference type="InterPro" id="IPR036291">
    <property type="entry name" value="NAD(P)-bd_dom_sf"/>
</dbReference>
<dbReference type="NCBIfam" id="TIGR00465">
    <property type="entry name" value="ilvC"/>
    <property type="match status" value="1"/>
</dbReference>
<dbReference type="NCBIfam" id="NF004017">
    <property type="entry name" value="PRK05479.1"/>
    <property type="match status" value="1"/>
</dbReference>
<dbReference type="NCBIfam" id="NF009940">
    <property type="entry name" value="PRK13403.1"/>
    <property type="match status" value="1"/>
</dbReference>
<dbReference type="PANTHER" id="PTHR21371">
    <property type="entry name" value="KETOL-ACID REDUCTOISOMERASE, MITOCHONDRIAL"/>
    <property type="match status" value="1"/>
</dbReference>
<dbReference type="PANTHER" id="PTHR21371:SF1">
    <property type="entry name" value="KETOL-ACID REDUCTOISOMERASE, MITOCHONDRIAL"/>
    <property type="match status" value="1"/>
</dbReference>
<dbReference type="Pfam" id="PF01450">
    <property type="entry name" value="KARI_C"/>
    <property type="match status" value="1"/>
</dbReference>
<dbReference type="Pfam" id="PF07991">
    <property type="entry name" value="KARI_N"/>
    <property type="match status" value="1"/>
</dbReference>
<dbReference type="PIRSF" id="PIRSF000116">
    <property type="entry name" value="IlvC_gammaproteo"/>
    <property type="match status" value="1"/>
</dbReference>
<dbReference type="SUPFAM" id="SSF48179">
    <property type="entry name" value="6-phosphogluconate dehydrogenase C-terminal domain-like"/>
    <property type="match status" value="1"/>
</dbReference>
<dbReference type="SUPFAM" id="SSF51735">
    <property type="entry name" value="NAD(P)-binding Rossmann-fold domains"/>
    <property type="match status" value="1"/>
</dbReference>
<dbReference type="PROSITE" id="PS51851">
    <property type="entry name" value="KARI_C"/>
    <property type="match status" value="1"/>
</dbReference>
<dbReference type="PROSITE" id="PS51850">
    <property type="entry name" value="KARI_N"/>
    <property type="match status" value="1"/>
</dbReference>
<sequence length="338" mass="36416">MKVFYDNDADLALIQKKKVAIIGYGSQGHAHALNLKDSGVSVVVGLRKDSSSWEKAGKAGLEVKEVAAAVAAADVVMILTPDEGQGALYRDEIAPNIRQGAALVFAHGFNIHFGQIHPRADLDCFLVAPKGPGHLVRSTYTQGGGVPSLIAVHQDASGNATNIALSYAKANGGTRAGVIETSFREETETDLFGEQAVLCGGATALVQAGFETLVEAGYAPEMAYFECMHELKLIVDLMYEGGISNMRYSISNTAEYGDLTRGPRVVNADTKAEMKKILTEIQNGQFAREFILENQSGKPTMQAMRRIGAEHPIEVVGSKLRSMMTWIGQSRIVDRSRN</sequence>
<accession>B7J643</accession>
<comment type="function">
    <text evidence="1">Involved in the biosynthesis of branched-chain amino acids (BCAA). Catalyzes an alkyl-migration followed by a ketol-acid reduction of (S)-2-acetolactate (S2AL) to yield (R)-2,3-dihydroxy-isovalerate. In the isomerase reaction, S2AL is rearranged via a Mg-dependent methyl migration to produce 3-hydroxy-3-methyl-2-ketobutyrate (HMKB). In the reductase reaction, this 2-ketoacid undergoes a metal-dependent reduction by NADPH to yield (R)-2,3-dihydroxy-isovalerate.</text>
</comment>
<comment type="catalytic activity">
    <reaction evidence="1">
        <text>(2R)-2,3-dihydroxy-3-methylbutanoate + NADP(+) = (2S)-2-acetolactate + NADPH + H(+)</text>
        <dbReference type="Rhea" id="RHEA:22068"/>
        <dbReference type="ChEBI" id="CHEBI:15378"/>
        <dbReference type="ChEBI" id="CHEBI:49072"/>
        <dbReference type="ChEBI" id="CHEBI:57783"/>
        <dbReference type="ChEBI" id="CHEBI:58349"/>
        <dbReference type="ChEBI" id="CHEBI:58476"/>
        <dbReference type="EC" id="1.1.1.86"/>
    </reaction>
</comment>
<comment type="catalytic activity">
    <reaction evidence="1">
        <text>(2R,3R)-2,3-dihydroxy-3-methylpentanoate + NADP(+) = (S)-2-ethyl-2-hydroxy-3-oxobutanoate + NADPH + H(+)</text>
        <dbReference type="Rhea" id="RHEA:13493"/>
        <dbReference type="ChEBI" id="CHEBI:15378"/>
        <dbReference type="ChEBI" id="CHEBI:49256"/>
        <dbReference type="ChEBI" id="CHEBI:49258"/>
        <dbReference type="ChEBI" id="CHEBI:57783"/>
        <dbReference type="ChEBI" id="CHEBI:58349"/>
        <dbReference type="EC" id="1.1.1.86"/>
    </reaction>
</comment>
<comment type="cofactor">
    <cofactor evidence="1">
        <name>Mg(2+)</name>
        <dbReference type="ChEBI" id="CHEBI:18420"/>
    </cofactor>
    <text evidence="1">Binds 2 magnesium ions per subunit.</text>
</comment>
<comment type="pathway">
    <text evidence="1">Amino-acid biosynthesis; L-isoleucine biosynthesis; L-isoleucine from 2-oxobutanoate: step 2/4.</text>
</comment>
<comment type="pathway">
    <text evidence="1">Amino-acid biosynthesis; L-valine biosynthesis; L-valine from pyruvate: step 2/4.</text>
</comment>
<comment type="similarity">
    <text evidence="1">Belongs to the ketol-acid reductoisomerase family.</text>
</comment>
<organism>
    <name type="scientific">Acidithiobacillus ferrooxidans (strain ATCC 23270 / DSM 14882 / CIP 104768 / NCIMB 8455)</name>
    <name type="common">Ferrobacillus ferrooxidans (strain ATCC 23270)</name>
    <dbReference type="NCBI Taxonomy" id="243159"/>
    <lineage>
        <taxon>Bacteria</taxon>
        <taxon>Pseudomonadati</taxon>
        <taxon>Pseudomonadota</taxon>
        <taxon>Acidithiobacillia</taxon>
        <taxon>Acidithiobacillales</taxon>
        <taxon>Acidithiobacillaceae</taxon>
        <taxon>Acidithiobacillus</taxon>
    </lineage>
</organism>
<feature type="chain" id="PRO_1000124246" description="Ketol-acid reductoisomerase (NADP(+))">
    <location>
        <begin position="1"/>
        <end position="338"/>
    </location>
</feature>
<feature type="domain" description="KARI N-terminal Rossmann" evidence="2">
    <location>
        <begin position="1"/>
        <end position="181"/>
    </location>
</feature>
<feature type="domain" description="KARI C-terminal knotted" evidence="3">
    <location>
        <begin position="182"/>
        <end position="327"/>
    </location>
</feature>
<feature type="active site" evidence="1">
    <location>
        <position position="107"/>
    </location>
</feature>
<feature type="binding site" evidence="1">
    <location>
        <begin position="24"/>
        <end position="27"/>
    </location>
    <ligand>
        <name>NADP(+)</name>
        <dbReference type="ChEBI" id="CHEBI:58349"/>
    </ligand>
</feature>
<feature type="binding site" evidence="1">
    <location>
        <position position="47"/>
    </location>
    <ligand>
        <name>NADP(+)</name>
        <dbReference type="ChEBI" id="CHEBI:58349"/>
    </ligand>
</feature>
<feature type="binding site" evidence="1">
    <location>
        <position position="50"/>
    </location>
    <ligand>
        <name>NADP(+)</name>
        <dbReference type="ChEBI" id="CHEBI:58349"/>
    </ligand>
</feature>
<feature type="binding site" evidence="1">
    <location>
        <position position="52"/>
    </location>
    <ligand>
        <name>NADP(+)</name>
        <dbReference type="ChEBI" id="CHEBI:58349"/>
    </ligand>
</feature>
<feature type="binding site" evidence="1">
    <location>
        <begin position="82"/>
        <end position="85"/>
    </location>
    <ligand>
        <name>NADP(+)</name>
        <dbReference type="ChEBI" id="CHEBI:58349"/>
    </ligand>
</feature>
<feature type="binding site" evidence="1">
    <location>
        <position position="133"/>
    </location>
    <ligand>
        <name>NADP(+)</name>
        <dbReference type="ChEBI" id="CHEBI:58349"/>
    </ligand>
</feature>
<feature type="binding site" evidence="1">
    <location>
        <position position="190"/>
    </location>
    <ligand>
        <name>Mg(2+)</name>
        <dbReference type="ChEBI" id="CHEBI:18420"/>
        <label>1</label>
    </ligand>
</feature>
<feature type="binding site" evidence="1">
    <location>
        <position position="190"/>
    </location>
    <ligand>
        <name>Mg(2+)</name>
        <dbReference type="ChEBI" id="CHEBI:18420"/>
        <label>2</label>
    </ligand>
</feature>
<feature type="binding site" evidence="1">
    <location>
        <position position="194"/>
    </location>
    <ligand>
        <name>Mg(2+)</name>
        <dbReference type="ChEBI" id="CHEBI:18420"/>
        <label>1</label>
    </ligand>
</feature>
<feature type="binding site" evidence="1">
    <location>
        <position position="226"/>
    </location>
    <ligand>
        <name>Mg(2+)</name>
        <dbReference type="ChEBI" id="CHEBI:18420"/>
        <label>2</label>
    </ligand>
</feature>
<feature type="binding site" evidence="1">
    <location>
        <position position="230"/>
    </location>
    <ligand>
        <name>Mg(2+)</name>
        <dbReference type="ChEBI" id="CHEBI:18420"/>
        <label>2</label>
    </ligand>
</feature>
<feature type="binding site" evidence="1">
    <location>
        <position position="251"/>
    </location>
    <ligand>
        <name>substrate</name>
    </ligand>
</feature>
<name>ILVC_ACIF2</name>
<protein>
    <recommendedName>
        <fullName evidence="1">Ketol-acid reductoisomerase (NADP(+))</fullName>
        <shortName evidence="1">KARI</shortName>
        <ecNumber evidence="1">1.1.1.86</ecNumber>
    </recommendedName>
    <alternativeName>
        <fullName evidence="1">Acetohydroxy-acid isomeroreductase</fullName>
        <shortName evidence="1">AHIR</shortName>
    </alternativeName>
    <alternativeName>
        <fullName evidence="1">Alpha-keto-beta-hydroxylacyl reductoisomerase</fullName>
    </alternativeName>
    <alternativeName>
        <fullName evidence="1">Ketol-acid reductoisomerase type 1</fullName>
    </alternativeName>
    <alternativeName>
        <fullName evidence="1">Ketol-acid reductoisomerase type I</fullName>
    </alternativeName>
</protein>
<reference key="1">
    <citation type="journal article" date="2008" name="BMC Genomics">
        <title>Acidithiobacillus ferrooxidans metabolism: from genome sequence to industrial applications.</title>
        <authorList>
            <person name="Valdes J."/>
            <person name="Pedroso I."/>
            <person name="Quatrini R."/>
            <person name="Dodson R.J."/>
            <person name="Tettelin H."/>
            <person name="Blake R. II"/>
            <person name="Eisen J.A."/>
            <person name="Holmes D.S."/>
        </authorList>
    </citation>
    <scope>NUCLEOTIDE SEQUENCE [LARGE SCALE GENOMIC DNA]</scope>
    <source>
        <strain>ATCC 23270 / DSM 14882 / CIP 104768 / NCIMB 8455</strain>
    </source>
</reference>
<gene>
    <name evidence="1" type="primary">ilvC</name>
    <name type="ordered locus">AFE_0747</name>
</gene>
<evidence type="ECO:0000255" key="1">
    <source>
        <dbReference type="HAMAP-Rule" id="MF_00435"/>
    </source>
</evidence>
<evidence type="ECO:0000255" key="2">
    <source>
        <dbReference type="PROSITE-ProRule" id="PRU01197"/>
    </source>
</evidence>
<evidence type="ECO:0000255" key="3">
    <source>
        <dbReference type="PROSITE-ProRule" id="PRU01198"/>
    </source>
</evidence>